<keyword id="KW-0028">Amino-acid biosynthesis</keyword>
<keyword id="KW-0963">Cytoplasm</keyword>
<keyword id="KW-0554">One-carbon metabolism</keyword>
<keyword id="KW-0663">Pyridoxal phosphate</keyword>
<keyword id="KW-0808">Transferase</keyword>
<evidence type="ECO:0000255" key="1">
    <source>
        <dbReference type="HAMAP-Rule" id="MF_00051"/>
    </source>
</evidence>
<sequence>MFTANMNIQDYDPILWQAIENENRRQEEHIELIASENYASPRVMQAQGSQFTNKYAEGYPGKRYYGGCEYADIVEQLAIDRAKQLFGADYVNVQPHSGSQANAAVYGALIQPNDTILGMDLAHGGHLTHGAKVSFSGKIYNSVLYGITAEGLIDYEDVRQKALECKPKMIVAGFSAYSQIVDWAKMREIADEVGAYLFVDMAHVAGLIAAGVYPSPLPYAHVVTTTTHKTLGGPRGGLILSACGDEEIYKKLQSSVFPANQGGPLVHIIAAKAVCFKEALEPEYKIYQQNVVKNAKAMVEVFKQRGYEVISNGTENHLFLVSFVKQGLTGKAADAALGQANITVNKNSVPNDPQKPFITSGIRIGTPAVTRRGFKEADVQALAGWMCDVLDSIGKDNHEQVIAETKAKVLDICARLPVYAK</sequence>
<protein>
    <recommendedName>
        <fullName evidence="1">Serine hydroxymethyltransferase</fullName>
        <shortName evidence="1">SHMT</shortName>
        <shortName evidence="1">Serine methylase</shortName>
        <ecNumber evidence="1">2.1.2.1</ecNumber>
    </recommendedName>
</protein>
<proteinExistence type="inferred from homology"/>
<gene>
    <name evidence="1" type="primary">glyA</name>
    <name type="ordered locus">APP7_0213</name>
</gene>
<dbReference type="EC" id="2.1.2.1" evidence="1"/>
<dbReference type="EMBL" id="CP001091">
    <property type="protein sequence ID" value="ACE60865.1"/>
    <property type="molecule type" value="Genomic_DNA"/>
</dbReference>
<dbReference type="RefSeq" id="WP_005596003.1">
    <property type="nucleotide sequence ID" value="NC_010939.1"/>
</dbReference>
<dbReference type="SMR" id="B3H053"/>
<dbReference type="GeneID" id="48598356"/>
<dbReference type="KEGG" id="apa:APP7_0213"/>
<dbReference type="HOGENOM" id="CLU_022477_2_1_6"/>
<dbReference type="UniPathway" id="UPA00193"/>
<dbReference type="UniPathway" id="UPA00288">
    <property type="reaction ID" value="UER01023"/>
</dbReference>
<dbReference type="Proteomes" id="UP000001226">
    <property type="component" value="Chromosome"/>
</dbReference>
<dbReference type="GO" id="GO:0005829">
    <property type="term" value="C:cytosol"/>
    <property type="evidence" value="ECO:0007669"/>
    <property type="project" value="TreeGrafter"/>
</dbReference>
<dbReference type="GO" id="GO:0004372">
    <property type="term" value="F:glycine hydroxymethyltransferase activity"/>
    <property type="evidence" value="ECO:0007669"/>
    <property type="project" value="UniProtKB-UniRule"/>
</dbReference>
<dbReference type="GO" id="GO:0030170">
    <property type="term" value="F:pyridoxal phosphate binding"/>
    <property type="evidence" value="ECO:0007669"/>
    <property type="project" value="UniProtKB-UniRule"/>
</dbReference>
<dbReference type="GO" id="GO:0019264">
    <property type="term" value="P:glycine biosynthetic process from serine"/>
    <property type="evidence" value="ECO:0007669"/>
    <property type="project" value="UniProtKB-UniRule"/>
</dbReference>
<dbReference type="GO" id="GO:0035999">
    <property type="term" value="P:tetrahydrofolate interconversion"/>
    <property type="evidence" value="ECO:0007669"/>
    <property type="project" value="UniProtKB-UniRule"/>
</dbReference>
<dbReference type="CDD" id="cd00378">
    <property type="entry name" value="SHMT"/>
    <property type="match status" value="1"/>
</dbReference>
<dbReference type="FunFam" id="3.40.640.10:FF:000001">
    <property type="entry name" value="Serine hydroxymethyltransferase"/>
    <property type="match status" value="1"/>
</dbReference>
<dbReference type="FunFam" id="3.90.1150.10:FF:000003">
    <property type="entry name" value="Serine hydroxymethyltransferase"/>
    <property type="match status" value="1"/>
</dbReference>
<dbReference type="Gene3D" id="3.90.1150.10">
    <property type="entry name" value="Aspartate Aminotransferase, domain 1"/>
    <property type="match status" value="1"/>
</dbReference>
<dbReference type="Gene3D" id="3.40.640.10">
    <property type="entry name" value="Type I PLP-dependent aspartate aminotransferase-like (Major domain)"/>
    <property type="match status" value="1"/>
</dbReference>
<dbReference type="HAMAP" id="MF_00051">
    <property type="entry name" value="SHMT"/>
    <property type="match status" value="1"/>
</dbReference>
<dbReference type="InterPro" id="IPR015424">
    <property type="entry name" value="PyrdxlP-dep_Trfase"/>
</dbReference>
<dbReference type="InterPro" id="IPR015421">
    <property type="entry name" value="PyrdxlP-dep_Trfase_major"/>
</dbReference>
<dbReference type="InterPro" id="IPR015422">
    <property type="entry name" value="PyrdxlP-dep_Trfase_small"/>
</dbReference>
<dbReference type="InterPro" id="IPR001085">
    <property type="entry name" value="Ser_HO-MeTrfase"/>
</dbReference>
<dbReference type="InterPro" id="IPR049943">
    <property type="entry name" value="Ser_HO-MeTrfase-like"/>
</dbReference>
<dbReference type="InterPro" id="IPR019798">
    <property type="entry name" value="Ser_HO-MeTrfase_PLP_BS"/>
</dbReference>
<dbReference type="InterPro" id="IPR039429">
    <property type="entry name" value="SHMT-like_dom"/>
</dbReference>
<dbReference type="NCBIfam" id="NF000586">
    <property type="entry name" value="PRK00011.1"/>
    <property type="match status" value="1"/>
</dbReference>
<dbReference type="PANTHER" id="PTHR11680">
    <property type="entry name" value="SERINE HYDROXYMETHYLTRANSFERASE"/>
    <property type="match status" value="1"/>
</dbReference>
<dbReference type="PANTHER" id="PTHR11680:SF50">
    <property type="entry name" value="SERINE HYDROXYMETHYLTRANSFERASE"/>
    <property type="match status" value="1"/>
</dbReference>
<dbReference type="Pfam" id="PF00464">
    <property type="entry name" value="SHMT"/>
    <property type="match status" value="1"/>
</dbReference>
<dbReference type="PIRSF" id="PIRSF000412">
    <property type="entry name" value="SHMT"/>
    <property type="match status" value="1"/>
</dbReference>
<dbReference type="SUPFAM" id="SSF53383">
    <property type="entry name" value="PLP-dependent transferases"/>
    <property type="match status" value="1"/>
</dbReference>
<dbReference type="PROSITE" id="PS00096">
    <property type="entry name" value="SHMT"/>
    <property type="match status" value="1"/>
</dbReference>
<organism>
    <name type="scientific">Actinobacillus pleuropneumoniae serotype 7 (strain AP76)</name>
    <dbReference type="NCBI Taxonomy" id="537457"/>
    <lineage>
        <taxon>Bacteria</taxon>
        <taxon>Pseudomonadati</taxon>
        <taxon>Pseudomonadota</taxon>
        <taxon>Gammaproteobacteria</taxon>
        <taxon>Pasteurellales</taxon>
        <taxon>Pasteurellaceae</taxon>
        <taxon>Actinobacillus</taxon>
    </lineage>
</organism>
<feature type="chain" id="PRO_1000091510" description="Serine hydroxymethyltransferase">
    <location>
        <begin position="1"/>
        <end position="421"/>
    </location>
</feature>
<feature type="binding site" evidence="1">
    <location>
        <position position="121"/>
    </location>
    <ligand>
        <name>(6S)-5,6,7,8-tetrahydrofolate</name>
        <dbReference type="ChEBI" id="CHEBI:57453"/>
    </ligand>
</feature>
<feature type="binding site" evidence="1">
    <location>
        <begin position="125"/>
        <end position="127"/>
    </location>
    <ligand>
        <name>(6S)-5,6,7,8-tetrahydrofolate</name>
        <dbReference type="ChEBI" id="CHEBI:57453"/>
    </ligand>
</feature>
<feature type="site" description="Plays an important role in substrate specificity" evidence="1">
    <location>
        <position position="228"/>
    </location>
</feature>
<feature type="modified residue" description="N6-(pyridoxal phosphate)lysine" evidence="1">
    <location>
        <position position="229"/>
    </location>
</feature>
<accession>B3H053</accession>
<reference key="1">
    <citation type="submission" date="2008-06" db="EMBL/GenBank/DDBJ databases">
        <title>Genome and proteome analysis of A. pleuropneumoniae serotype 7.</title>
        <authorList>
            <person name="Linke B."/>
            <person name="Buettner F."/>
            <person name="Martinez-Arias R."/>
            <person name="Goesmann A."/>
            <person name="Baltes N."/>
            <person name="Tegetmeyer H."/>
            <person name="Singh M."/>
            <person name="Gerlach G.F."/>
        </authorList>
    </citation>
    <scope>NUCLEOTIDE SEQUENCE [LARGE SCALE GENOMIC DNA]</scope>
    <source>
        <strain>AP76</strain>
    </source>
</reference>
<comment type="function">
    <text evidence="1">Catalyzes the reversible interconversion of serine and glycine with tetrahydrofolate (THF) serving as the one-carbon carrier. This reaction serves as the major source of one-carbon groups required for the biosynthesis of purines, thymidylate, methionine, and other important biomolecules. Also exhibits THF-independent aldolase activity toward beta-hydroxyamino acids, producing glycine and aldehydes, via a retro-aldol mechanism.</text>
</comment>
<comment type="catalytic activity">
    <reaction evidence="1">
        <text>(6R)-5,10-methylene-5,6,7,8-tetrahydrofolate + glycine + H2O = (6S)-5,6,7,8-tetrahydrofolate + L-serine</text>
        <dbReference type="Rhea" id="RHEA:15481"/>
        <dbReference type="ChEBI" id="CHEBI:15377"/>
        <dbReference type="ChEBI" id="CHEBI:15636"/>
        <dbReference type="ChEBI" id="CHEBI:33384"/>
        <dbReference type="ChEBI" id="CHEBI:57305"/>
        <dbReference type="ChEBI" id="CHEBI:57453"/>
        <dbReference type="EC" id="2.1.2.1"/>
    </reaction>
</comment>
<comment type="cofactor">
    <cofactor evidence="1">
        <name>pyridoxal 5'-phosphate</name>
        <dbReference type="ChEBI" id="CHEBI:597326"/>
    </cofactor>
</comment>
<comment type="pathway">
    <text evidence="1">One-carbon metabolism; tetrahydrofolate interconversion.</text>
</comment>
<comment type="pathway">
    <text evidence="1">Amino-acid biosynthesis; glycine biosynthesis; glycine from L-serine: step 1/1.</text>
</comment>
<comment type="subunit">
    <text evidence="1">Homodimer.</text>
</comment>
<comment type="subcellular location">
    <subcellularLocation>
        <location evidence="1">Cytoplasm</location>
    </subcellularLocation>
</comment>
<comment type="similarity">
    <text evidence="1">Belongs to the SHMT family.</text>
</comment>
<name>GLYA_ACTP7</name>